<evidence type="ECO:0000255" key="1">
    <source>
        <dbReference type="HAMAP-Rule" id="MF_01858"/>
    </source>
</evidence>
<protein>
    <recommendedName>
        <fullName evidence="1">Ribosomal RNA large subunit methyltransferase K/L</fullName>
    </recommendedName>
    <domain>
        <recommendedName>
            <fullName evidence="1">23S rRNA m2G2445 methyltransferase</fullName>
            <ecNumber evidence="1">2.1.1.173</ecNumber>
        </recommendedName>
        <alternativeName>
            <fullName evidence="1">rRNA (guanine-N(2)-)-methyltransferase RlmL</fullName>
        </alternativeName>
    </domain>
    <domain>
        <recommendedName>
            <fullName evidence="1">23S rRNA m7G2069 methyltransferase</fullName>
            <ecNumber evidence="1">2.1.1.264</ecNumber>
        </recommendedName>
        <alternativeName>
            <fullName evidence="1">rRNA (guanine-N(7)-)-methyltransferase RlmK</fullName>
        </alternativeName>
    </domain>
</protein>
<reference key="1">
    <citation type="journal article" date="2008" name="Proc. Natl. Acad. Sci. U.S.A.">
        <title>Nitrogen fixation island and rhizosphere competence traits in the genome of root-associated Pseudomonas stutzeri A1501.</title>
        <authorList>
            <person name="Yan Y."/>
            <person name="Yang J."/>
            <person name="Dou Y."/>
            <person name="Chen M."/>
            <person name="Ping S."/>
            <person name="Peng J."/>
            <person name="Lu W."/>
            <person name="Zhang W."/>
            <person name="Yao Z."/>
            <person name="Li H."/>
            <person name="Liu W."/>
            <person name="He S."/>
            <person name="Geng L."/>
            <person name="Zhang X."/>
            <person name="Yang F."/>
            <person name="Yu H."/>
            <person name="Zhan Y."/>
            <person name="Li D."/>
            <person name="Lin Z."/>
            <person name="Wang Y."/>
            <person name="Elmerich C."/>
            <person name="Lin M."/>
            <person name="Jin Q."/>
        </authorList>
    </citation>
    <scope>NUCLEOTIDE SEQUENCE [LARGE SCALE GENOMIC DNA]</scope>
    <source>
        <strain>A1501</strain>
    </source>
</reference>
<organism>
    <name type="scientific">Stutzerimonas stutzeri (strain A1501)</name>
    <name type="common">Pseudomonas stutzeri</name>
    <dbReference type="NCBI Taxonomy" id="379731"/>
    <lineage>
        <taxon>Bacteria</taxon>
        <taxon>Pseudomonadati</taxon>
        <taxon>Pseudomonadota</taxon>
        <taxon>Gammaproteobacteria</taxon>
        <taxon>Pseudomonadales</taxon>
        <taxon>Pseudomonadaceae</taxon>
        <taxon>Stutzerimonas</taxon>
    </lineage>
</organism>
<comment type="function">
    <text evidence="1">Specifically methylates the guanine in position 2445 (m2G2445) and the guanine in position 2069 (m7G2069) of 23S rRNA.</text>
</comment>
<comment type="catalytic activity">
    <reaction evidence="1">
        <text>guanosine(2445) in 23S rRNA + S-adenosyl-L-methionine = N(2)-methylguanosine(2445) in 23S rRNA + S-adenosyl-L-homocysteine + H(+)</text>
        <dbReference type="Rhea" id="RHEA:42740"/>
        <dbReference type="Rhea" id="RHEA-COMP:10215"/>
        <dbReference type="Rhea" id="RHEA-COMP:10216"/>
        <dbReference type="ChEBI" id="CHEBI:15378"/>
        <dbReference type="ChEBI" id="CHEBI:57856"/>
        <dbReference type="ChEBI" id="CHEBI:59789"/>
        <dbReference type="ChEBI" id="CHEBI:74269"/>
        <dbReference type="ChEBI" id="CHEBI:74481"/>
        <dbReference type="EC" id="2.1.1.173"/>
    </reaction>
</comment>
<comment type="catalytic activity">
    <reaction evidence="1">
        <text>guanosine(2069) in 23S rRNA + S-adenosyl-L-methionine = N(2)-methylguanosine(2069) in 23S rRNA + S-adenosyl-L-homocysteine + H(+)</text>
        <dbReference type="Rhea" id="RHEA:43772"/>
        <dbReference type="Rhea" id="RHEA-COMP:10688"/>
        <dbReference type="Rhea" id="RHEA-COMP:10689"/>
        <dbReference type="ChEBI" id="CHEBI:15378"/>
        <dbReference type="ChEBI" id="CHEBI:57856"/>
        <dbReference type="ChEBI" id="CHEBI:59789"/>
        <dbReference type="ChEBI" id="CHEBI:74269"/>
        <dbReference type="ChEBI" id="CHEBI:74481"/>
        <dbReference type="EC" id="2.1.1.264"/>
    </reaction>
</comment>
<comment type="subcellular location">
    <subcellularLocation>
        <location evidence="1">Cytoplasm</location>
    </subcellularLocation>
</comment>
<comment type="similarity">
    <text evidence="1">Belongs to the methyltransferase superfamily. RlmKL family.</text>
</comment>
<dbReference type="EC" id="2.1.1.173" evidence="1"/>
<dbReference type="EC" id="2.1.1.264" evidence="1"/>
<dbReference type="EMBL" id="CP000304">
    <property type="protein sequence ID" value="ABP80040.1"/>
    <property type="molecule type" value="Genomic_DNA"/>
</dbReference>
<dbReference type="RefSeq" id="WP_011913503.1">
    <property type="nucleotide sequence ID" value="NC_009434.1"/>
</dbReference>
<dbReference type="SMR" id="A4VM39"/>
<dbReference type="KEGG" id="psa:PST_2388"/>
<dbReference type="eggNOG" id="COG0116">
    <property type="taxonomic scope" value="Bacteria"/>
</dbReference>
<dbReference type="eggNOG" id="COG1092">
    <property type="taxonomic scope" value="Bacteria"/>
</dbReference>
<dbReference type="HOGENOM" id="CLU_014042_2_0_6"/>
<dbReference type="Proteomes" id="UP000000233">
    <property type="component" value="Chromosome"/>
</dbReference>
<dbReference type="GO" id="GO:0005737">
    <property type="term" value="C:cytoplasm"/>
    <property type="evidence" value="ECO:0007669"/>
    <property type="project" value="UniProtKB-SubCell"/>
</dbReference>
<dbReference type="GO" id="GO:0052915">
    <property type="term" value="F:23S rRNA (guanine(2445)-N(2))-methyltransferase activity"/>
    <property type="evidence" value="ECO:0007669"/>
    <property type="project" value="UniProtKB-UniRule"/>
</dbReference>
<dbReference type="GO" id="GO:0003723">
    <property type="term" value="F:RNA binding"/>
    <property type="evidence" value="ECO:0007669"/>
    <property type="project" value="UniProtKB-KW"/>
</dbReference>
<dbReference type="GO" id="GO:0070043">
    <property type="term" value="F:rRNA (guanine-N7-)-methyltransferase activity"/>
    <property type="evidence" value="ECO:0007669"/>
    <property type="project" value="UniProtKB-UniRule"/>
</dbReference>
<dbReference type="CDD" id="cd02440">
    <property type="entry name" value="AdoMet_MTases"/>
    <property type="match status" value="1"/>
</dbReference>
<dbReference type="CDD" id="cd11715">
    <property type="entry name" value="THUMP_AdoMetMT"/>
    <property type="match status" value="1"/>
</dbReference>
<dbReference type="Gene3D" id="3.30.2130.30">
    <property type="match status" value="1"/>
</dbReference>
<dbReference type="Gene3D" id="3.30.750.80">
    <property type="entry name" value="RNA methyltransferase domain (HRMD) like"/>
    <property type="match status" value="1"/>
</dbReference>
<dbReference type="Gene3D" id="3.40.50.150">
    <property type="entry name" value="Vaccinia Virus protein VP39"/>
    <property type="match status" value="2"/>
</dbReference>
<dbReference type="HAMAP" id="MF_01858">
    <property type="entry name" value="23SrRNA_methyltr_KL"/>
    <property type="match status" value="1"/>
</dbReference>
<dbReference type="InterPro" id="IPR017244">
    <property type="entry name" value="23SrRNA_methyltr_KL"/>
</dbReference>
<dbReference type="InterPro" id="IPR002052">
    <property type="entry name" value="DNA_methylase_N6_adenine_CS"/>
</dbReference>
<dbReference type="InterPro" id="IPR000241">
    <property type="entry name" value="RlmKL-like_Mtase"/>
</dbReference>
<dbReference type="InterPro" id="IPR054170">
    <property type="entry name" value="RlmL_1st"/>
</dbReference>
<dbReference type="InterPro" id="IPR019614">
    <property type="entry name" value="SAM-dep_methyl-trfase"/>
</dbReference>
<dbReference type="InterPro" id="IPR029063">
    <property type="entry name" value="SAM-dependent_MTases_sf"/>
</dbReference>
<dbReference type="InterPro" id="IPR004114">
    <property type="entry name" value="THUMP_dom"/>
</dbReference>
<dbReference type="NCBIfam" id="NF008748">
    <property type="entry name" value="PRK11783.1"/>
    <property type="match status" value="1"/>
</dbReference>
<dbReference type="PANTHER" id="PTHR47313">
    <property type="entry name" value="RIBOSOMAL RNA LARGE SUBUNIT METHYLTRANSFERASE K/L"/>
    <property type="match status" value="1"/>
</dbReference>
<dbReference type="PANTHER" id="PTHR47313:SF1">
    <property type="entry name" value="RIBOSOMAL RNA LARGE SUBUNIT METHYLTRANSFERASE K_L"/>
    <property type="match status" value="1"/>
</dbReference>
<dbReference type="Pfam" id="PF10672">
    <property type="entry name" value="Methyltrans_SAM"/>
    <property type="match status" value="1"/>
</dbReference>
<dbReference type="Pfam" id="PF22020">
    <property type="entry name" value="RlmL_1st"/>
    <property type="match status" value="1"/>
</dbReference>
<dbReference type="Pfam" id="PF02926">
    <property type="entry name" value="THUMP"/>
    <property type="match status" value="1"/>
</dbReference>
<dbReference type="Pfam" id="PF01170">
    <property type="entry name" value="UPF0020"/>
    <property type="match status" value="1"/>
</dbReference>
<dbReference type="PIRSF" id="PIRSF037618">
    <property type="entry name" value="RNA_Mtase_bacteria_prd"/>
    <property type="match status" value="1"/>
</dbReference>
<dbReference type="SMART" id="SM00981">
    <property type="entry name" value="THUMP"/>
    <property type="match status" value="1"/>
</dbReference>
<dbReference type="SUPFAM" id="SSF53335">
    <property type="entry name" value="S-adenosyl-L-methionine-dependent methyltransferases"/>
    <property type="match status" value="2"/>
</dbReference>
<dbReference type="PROSITE" id="PS51165">
    <property type="entry name" value="THUMP"/>
    <property type="match status" value="1"/>
</dbReference>
<feature type="chain" id="PRO_0000366795" description="Ribosomal RNA large subunit methyltransferase K/L">
    <location>
        <begin position="1"/>
        <end position="725"/>
    </location>
</feature>
<feature type="domain" description="THUMP" evidence="1">
    <location>
        <begin position="46"/>
        <end position="157"/>
    </location>
</feature>
<name>RLMKL_STUS1</name>
<proteinExistence type="inferred from homology"/>
<keyword id="KW-0963">Cytoplasm</keyword>
<keyword id="KW-0489">Methyltransferase</keyword>
<keyword id="KW-1185">Reference proteome</keyword>
<keyword id="KW-0694">RNA-binding</keyword>
<keyword id="KW-0698">rRNA processing</keyword>
<keyword id="KW-0949">S-adenosyl-L-methionine</keyword>
<keyword id="KW-0808">Transferase</keyword>
<accession>A4VM39</accession>
<gene>
    <name evidence="1" type="primary">rlmL</name>
    <name type="ordered locus">PST_2388</name>
</gene>
<sequence>MTDRHELILTCPKGLEGLLLEEATALGLEEGREQTSAVRGYGALEVGYRLCLWSRLANRVLLVISRFPTVDAETLYQGVHAVDWAEHLLPSGSLAVEFSGRGSGIDNTHFGALKVKDAIVDRLRSASGERPSIDKLDPDLRVHLRLDKGQAVLSLDLSGHSLHQRGYRLQQGAAPLKENLAAAILIRAGWPRIAAAGGALTDPMCGVGTFLVEGAMMAADIAPNLKRERWGFSAWLGHVPALWNRLHADAQARAEAGLARPPLWIRGYEADPRLIQPGRNNIERAGLSSWIRIYQGDVGSFEPRPDQNQKGLVICNPPYGERLGDEASLLYLYQNLGERLRQACLGWEAAVFTAAPDLGKRMGIRSHKQYAFWNGALPCKLLLIKVELDQFVTGQRAGSTEPQPQQAPVEQARLSEGGQMFANRLQKNLRQLGKWARREGIECYRLYDADMPEYALAVDLYRDWVHVQEYAPPRSIDPDKAQARLLDALAAIPQALGIAREKVVVKRRERQSGTRQYERQASQGEFLEVSEGGVKLLVNLTDYLDTGLFLDHRPLRLRIQREAAGKRFLNLFCYTATATVHAAKGGARSTTSVDLSRTYLDWARRNLSLNGFSDRQRLEQGDVMAWLEADRGEYDLIFIDPPTFSNSKRMEGVFDVQRDHVALLDLAMARLATGGTLYFSNNFRKFVLDASLMDRYAVEEITASTLDEDFRRNPRIHRAWKLQAR</sequence>